<comment type="subcellular location">
    <subcellularLocation>
        <location evidence="3">Membrane</location>
        <topology evidence="3">Multi-pass membrane protein</topology>
    </subcellularLocation>
</comment>
<comment type="similarity">
    <text evidence="3">Belongs to the nucleobase:cation symporter-2 (NCS2) (TC 2.A.40) family.</text>
</comment>
<sequence>MANGAGNGGGGAGGNGGGGNNGAGNRAEELQPHPVKEQLPGIQYCVNSPPPWLEAVVLGFQHYLLSLGITVLIPSLLVPLMGGGDAEKVKVIQTLLFVSGLTTLFQSFFGTRLPVIASASYAYIIPITSIIYSTRFTYYTDPFERFVRTMRSIQGALIITGCFQVLVCFLGVWRNIVRFLSPLSIAPLVTFTGLGLYHIGFPLVKKGPMIWDGNRCDRYGMMLCIPVVWLFAQLLTSSGVYDHKPQTTQTSCRTDRTGLITNTPCPTFDITDSFAMMAASFVTLFESTGLFYASARYGKNVGLLAMTKVGSRRVIQISAAFMLFFSIFGKFGAFFASIPLPIMASLYCIVLCFVSSAGLSFLQFCNLNSFNTKFILGFSFFMAISIPQYFREYYNGVGRCDKSDIHVTYNGCGNNCDSA</sequence>
<accession>Q3E956</accession>
<evidence type="ECO:0000255" key="1"/>
<evidence type="ECO:0000256" key="2">
    <source>
        <dbReference type="SAM" id="MobiDB-lite"/>
    </source>
</evidence>
<evidence type="ECO:0000305" key="3"/>
<gene>
    <name type="primary">NAT9</name>
    <name type="ordered locus">At5g25420</name>
    <name type="ORF">F18G18.160</name>
</gene>
<proteinExistence type="inferred from homology"/>
<name>NBAT9_ARATH</name>
<protein>
    <recommendedName>
        <fullName>Putative nucleobase-ascorbate transporter 9</fullName>
        <shortName>AtNAT9</shortName>
    </recommendedName>
</protein>
<dbReference type="EMBL" id="AC006258">
    <property type="status" value="NOT_ANNOTATED_CDS"/>
    <property type="molecule type" value="Genomic_DNA"/>
</dbReference>
<dbReference type="EMBL" id="CP002688">
    <property type="protein sequence ID" value="AED93439.1"/>
    <property type="molecule type" value="Genomic_DNA"/>
</dbReference>
<dbReference type="RefSeq" id="NP_197924.1">
    <property type="nucleotide sequence ID" value="NM_122452.1"/>
</dbReference>
<dbReference type="SMR" id="Q3E956"/>
<dbReference type="FunCoup" id="Q3E956">
    <property type="interactions" value="55"/>
</dbReference>
<dbReference type="STRING" id="3702.Q3E956"/>
<dbReference type="PaxDb" id="3702-AT5G25420.1"/>
<dbReference type="EnsemblPlants" id="AT5G25420.1">
    <property type="protein sequence ID" value="AT5G25420.1"/>
    <property type="gene ID" value="AT5G25420"/>
</dbReference>
<dbReference type="GeneID" id="832615"/>
<dbReference type="Gramene" id="AT5G25420.1">
    <property type="protein sequence ID" value="AT5G25420.1"/>
    <property type="gene ID" value="AT5G25420"/>
</dbReference>
<dbReference type="KEGG" id="ath:AT5G25420"/>
<dbReference type="Araport" id="AT5G25420"/>
<dbReference type="TAIR" id="AT5G25420"/>
<dbReference type="eggNOG" id="KOG1292">
    <property type="taxonomic scope" value="Eukaryota"/>
</dbReference>
<dbReference type="HOGENOM" id="CLU_017959_5_3_1"/>
<dbReference type="InParanoid" id="Q3E956"/>
<dbReference type="OMA" id="GIMICIP"/>
<dbReference type="PhylomeDB" id="Q3E956"/>
<dbReference type="PRO" id="PR:Q3E956"/>
<dbReference type="Proteomes" id="UP000006548">
    <property type="component" value="Chromosome 5"/>
</dbReference>
<dbReference type="ExpressionAtlas" id="Q3E956">
    <property type="expression patterns" value="baseline"/>
</dbReference>
<dbReference type="GO" id="GO:0016020">
    <property type="term" value="C:membrane"/>
    <property type="evidence" value="ECO:0007669"/>
    <property type="project" value="UniProtKB-SubCell"/>
</dbReference>
<dbReference type="GO" id="GO:0022857">
    <property type="term" value="F:transmembrane transporter activity"/>
    <property type="evidence" value="ECO:0007669"/>
    <property type="project" value="InterPro"/>
</dbReference>
<dbReference type="InterPro" id="IPR006043">
    <property type="entry name" value="NCS2"/>
</dbReference>
<dbReference type="PANTHER" id="PTHR11119">
    <property type="entry name" value="XANTHINE-URACIL / VITAMIN C PERMEASE FAMILY MEMBER"/>
    <property type="match status" value="1"/>
</dbReference>
<dbReference type="Pfam" id="PF00860">
    <property type="entry name" value="Xan_ur_permease"/>
    <property type="match status" value="2"/>
</dbReference>
<organism>
    <name type="scientific">Arabidopsis thaliana</name>
    <name type="common">Mouse-ear cress</name>
    <dbReference type="NCBI Taxonomy" id="3702"/>
    <lineage>
        <taxon>Eukaryota</taxon>
        <taxon>Viridiplantae</taxon>
        <taxon>Streptophyta</taxon>
        <taxon>Embryophyta</taxon>
        <taxon>Tracheophyta</taxon>
        <taxon>Spermatophyta</taxon>
        <taxon>Magnoliopsida</taxon>
        <taxon>eudicotyledons</taxon>
        <taxon>Gunneridae</taxon>
        <taxon>Pentapetalae</taxon>
        <taxon>rosids</taxon>
        <taxon>malvids</taxon>
        <taxon>Brassicales</taxon>
        <taxon>Brassicaceae</taxon>
        <taxon>Camelineae</taxon>
        <taxon>Arabidopsis</taxon>
    </lineage>
</organism>
<reference key="1">
    <citation type="journal article" date="2000" name="Nature">
        <title>Sequence and analysis of chromosome 5 of the plant Arabidopsis thaliana.</title>
        <authorList>
            <person name="Tabata S."/>
            <person name="Kaneko T."/>
            <person name="Nakamura Y."/>
            <person name="Kotani H."/>
            <person name="Kato T."/>
            <person name="Asamizu E."/>
            <person name="Miyajima N."/>
            <person name="Sasamoto S."/>
            <person name="Kimura T."/>
            <person name="Hosouchi T."/>
            <person name="Kawashima K."/>
            <person name="Kohara M."/>
            <person name="Matsumoto M."/>
            <person name="Matsuno A."/>
            <person name="Muraki A."/>
            <person name="Nakayama S."/>
            <person name="Nakazaki N."/>
            <person name="Naruo K."/>
            <person name="Okumura S."/>
            <person name="Shinpo S."/>
            <person name="Takeuchi C."/>
            <person name="Wada T."/>
            <person name="Watanabe A."/>
            <person name="Yamada M."/>
            <person name="Yasuda M."/>
            <person name="Sato S."/>
            <person name="de la Bastide M."/>
            <person name="Huang E."/>
            <person name="Spiegel L."/>
            <person name="Gnoj L."/>
            <person name="O'Shaughnessy A."/>
            <person name="Preston R."/>
            <person name="Habermann K."/>
            <person name="Murray J."/>
            <person name="Johnson D."/>
            <person name="Rohlfing T."/>
            <person name="Nelson J."/>
            <person name="Stoneking T."/>
            <person name="Pepin K."/>
            <person name="Spieth J."/>
            <person name="Sekhon M."/>
            <person name="Armstrong J."/>
            <person name="Becker M."/>
            <person name="Belter E."/>
            <person name="Cordum H."/>
            <person name="Cordes M."/>
            <person name="Courtney L."/>
            <person name="Courtney W."/>
            <person name="Dante M."/>
            <person name="Du H."/>
            <person name="Edwards J."/>
            <person name="Fryman J."/>
            <person name="Haakensen B."/>
            <person name="Lamar E."/>
            <person name="Latreille P."/>
            <person name="Leonard S."/>
            <person name="Meyer R."/>
            <person name="Mulvaney E."/>
            <person name="Ozersky P."/>
            <person name="Riley A."/>
            <person name="Strowmatt C."/>
            <person name="Wagner-McPherson C."/>
            <person name="Wollam A."/>
            <person name="Yoakum M."/>
            <person name="Bell M."/>
            <person name="Dedhia N."/>
            <person name="Parnell L."/>
            <person name="Shah R."/>
            <person name="Rodriguez M."/>
            <person name="Hoon See L."/>
            <person name="Vil D."/>
            <person name="Baker J."/>
            <person name="Kirchoff K."/>
            <person name="Toth K."/>
            <person name="King L."/>
            <person name="Bahret A."/>
            <person name="Miller B."/>
            <person name="Marra M.A."/>
            <person name="Martienssen R."/>
            <person name="McCombie W.R."/>
            <person name="Wilson R.K."/>
            <person name="Murphy G."/>
            <person name="Bancroft I."/>
            <person name="Volckaert G."/>
            <person name="Wambutt R."/>
            <person name="Duesterhoeft A."/>
            <person name="Stiekema W."/>
            <person name="Pohl T."/>
            <person name="Entian K.-D."/>
            <person name="Terryn N."/>
            <person name="Hartley N."/>
            <person name="Bent E."/>
            <person name="Johnson S."/>
            <person name="Langham S.-A."/>
            <person name="McCullagh B."/>
            <person name="Robben J."/>
            <person name="Grymonprez B."/>
            <person name="Zimmermann W."/>
            <person name="Ramsperger U."/>
            <person name="Wedler H."/>
            <person name="Balke K."/>
            <person name="Wedler E."/>
            <person name="Peters S."/>
            <person name="van Staveren M."/>
            <person name="Dirkse W."/>
            <person name="Mooijman P."/>
            <person name="Klein Lankhorst R."/>
            <person name="Weitzenegger T."/>
            <person name="Bothe G."/>
            <person name="Rose M."/>
            <person name="Hauf J."/>
            <person name="Berneiser S."/>
            <person name="Hempel S."/>
            <person name="Feldpausch M."/>
            <person name="Lamberth S."/>
            <person name="Villarroel R."/>
            <person name="Gielen J."/>
            <person name="Ardiles W."/>
            <person name="Bents O."/>
            <person name="Lemcke K."/>
            <person name="Kolesov G."/>
            <person name="Mayer K.F.X."/>
            <person name="Rudd S."/>
            <person name="Schoof H."/>
            <person name="Schueller C."/>
            <person name="Zaccaria P."/>
            <person name="Mewes H.-W."/>
            <person name="Bevan M."/>
            <person name="Fransz P.F."/>
        </authorList>
    </citation>
    <scope>NUCLEOTIDE SEQUENCE [LARGE SCALE GENOMIC DNA]</scope>
    <source>
        <strain>cv. Columbia</strain>
    </source>
</reference>
<reference key="2">
    <citation type="journal article" date="2017" name="Plant J.">
        <title>Araport11: a complete reannotation of the Arabidopsis thaliana reference genome.</title>
        <authorList>
            <person name="Cheng C.Y."/>
            <person name="Krishnakumar V."/>
            <person name="Chan A.P."/>
            <person name="Thibaud-Nissen F."/>
            <person name="Schobel S."/>
            <person name="Town C.D."/>
        </authorList>
    </citation>
    <scope>GENOME REANNOTATION</scope>
    <source>
        <strain>cv. Columbia</strain>
    </source>
</reference>
<reference key="3">
    <citation type="journal article" date="2006" name="Plant Cell Physiol.">
        <title>Identification and expression analysis of twelve members of the nucleobase-ascorbate transporter (NAT) gene family in Arabidopsis thaliana.</title>
        <authorList>
            <person name="Maurino V.G."/>
            <person name="Grube E."/>
            <person name="Zielinski J."/>
            <person name="Schild A."/>
            <person name="Fischer K."/>
            <person name="Flugge U.-I."/>
        </authorList>
    </citation>
    <scope>GENE FAMILY</scope>
</reference>
<feature type="chain" id="PRO_0000270166" description="Putative nucleobase-ascorbate transporter 9">
    <location>
        <begin position="1"/>
        <end position="419"/>
    </location>
</feature>
<feature type="transmembrane region" description="Helical" evidence="1">
    <location>
        <begin position="64"/>
        <end position="84"/>
    </location>
</feature>
<feature type="transmembrane region" description="Helical" evidence="1">
    <location>
        <begin position="91"/>
        <end position="111"/>
    </location>
</feature>
<feature type="transmembrane region" description="Helical" evidence="1">
    <location>
        <begin position="113"/>
        <end position="133"/>
    </location>
</feature>
<feature type="transmembrane region" description="Helical" evidence="1">
    <location>
        <begin position="153"/>
        <end position="173"/>
    </location>
</feature>
<feature type="transmembrane region" description="Helical" evidence="1">
    <location>
        <begin position="184"/>
        <end position="204"/>
    </location>
</feature>
<feature type="transmembrane region" description="Helical" evidence="1">
    <location>
        <begin position="220"/>
        <end position="240"/>
    </location>
</feature>
<feature type="transmembrane region" description="Helical" evidence="1">
    <location>
        <begin position="273"/>
        <end position="293"/>
    </location>
</feature>
<feature type="transmembrane region" description="Helical" evidence="1">
    <location>
        <begin position="313"/>
        <end position="333"/>
    </location>
</feature>
<feature type="transmembrane region" description="Helical" evidence="1">
    <location>
        <begin position="334"/>
        <end position="354"/>
    </location>
</feature>
<feature type="transmembrane region" description="Helical" evidence="1">
    <location>
        <begin position="370"/>
        <end position="390"/>
    </location>
</feature>
<feature type="region of interest" description="Disordered" evidence="2">
    <location>
        <begin position="1"/>
        <end position="28"/>
    </location>
</feature>
<feature type="compositionally biased region" description="Gly residues" evidence="2">
    <location>
        <begin position="1"/>
        <end position="22"/>
    </location>
</feature>
<keyword id="KW-0472">Membrane</keyword>
<keyword id="KW-1185">Reference proteome</keyword>
<keyword id="KW-0812">Transmembrane</keyword>
<keyword id="KW-1133">Transmembrane helix</keyword>
<keyword id="KW-0813">Transport</keyword>